<sequence length="507" mass="58846">MNPLSQSALVPLRKKAKMAPISQSFCQHNVKFKEIVLFLVERKMGSSRRTFLMELARKRGFQTEIELSDSVTHIVAENNSGAEVLEWLQSKKLGFTVKTHILDISWFTECMEAGRPVEIQNRHLLPVQQDCSANFNPPLSSSCVQVSQYACQRCTTLQDTNRIFTDAFDILAEHFEFCENKGRTVAFLRASSLIKSLPFPITAMKELEGLPWLGDQMKGIIEEILEEGKSYKVLEVMNEERYKSFKQFTSVFGVGLKTSDKWFRMGFRTLEEIKNEKELKLTKMQKCGLLYYEDITSYVSRAEAETTEQLIKSIVWKFVPDAIVTLTGGFRRGKKKGHDVDILITCARKGKEKNILHNTMSVLKNRGLLLFYNIIESTFDETKLPSRHVDALDHFQKCFTILKLPKRQMDIGNIIDPHECERKNWKAVRLDLVITPYEQYPYALLGWTGSRQFERDLRRYATHEKRMMLDNHGLYDKTKNNFLKANNEEDIFKQLGLDYLEPWERNA</sequence>
<dbReference type="EC" id="2.7.7.31"/>
<dbReference type="EMBL" id="U07803">
    <property type="protein sequence ID" value="AAA18493.1"/>
    <property type="molecule type" value="mRNA"/>
</dbReference>
<dbReference type="PIR" id="I51658">
    <property type="entry name" value="I51658"/>
</dbReference>
<dbReference type="RefSeq" id="NP_001079251.1">
    <property type="nucleotide sequence ID" value="NM_001085782.1"/>
</dbReference>
<dbReference type="SMR" id="P42118"/>
<dbReference type="GeneID" id="378525"/>
<dbReference type="KEGG" id="xla:378525"/>
<dbReference type="AGR" id="Xenbase:XB-GENE-6252658"/>
<dbReference type="CTD" id="378525"/>
<dbReference type="Xenbase" id="XB-GENE-6252658">
    <property type="gene designation" value="dntt.L"/>
</dbReference>
<dbReference type="OMA" id="PKVINLW"/>
<dbReference type="OrthoDB" id="205514at2759"/>
<dbReference type="Proteomes" id="UP000186698">
    <property type="component" value="Chromosome 7L"/>
</dbReference>
<dbReference type="GO" id="GO:0005634">
    <property type="term" value="C:nucleus"/>
    <property type="evidence" value="ECO:0000250"/>
    <property type="project" value="UniProtKB"/>
</dbReference>
<dbReference type="GO" id="GO:0003677">
    <property type="term" value="F:DNA binding"/>
    <property type="evidence" value="ECO:0007669"/>
    <property type="project" value="InterPro"/>
</dbReference>
<dbReference type="GO" id="GO:0003912">
    <property type="term" value="F:DNA nucleotidylexotransferase activity"/>
    <property type="evidence" value="ECO:0000250"/>
    <property type="project" value="UniProtKB"/>
</dbReference>
<dbReference type="GO" id="GO:0003887">
    <property type="term" value="F:DNA-directed DNA polymerase activity"/>
    <property type="evidence" value="ECO:0007669"/>
    <property type="project" value="InterPro"/>
</dbReference>
<dbReference type="GO" id="GO:0046872">
    <property type="term" value="F:metal ion binding"/>
    <property type="evidence" value="ECO:0007669"/>
    <property type="project" value="UniProtKB-KW"/>
</dbReference>
<dbReference type="GO" id="GO:0006259">
    <property type="term" value="P:DNA metabolic process"/>
    <property type="evidence" value="ECO:0000250"/>
    <property type="project" value="UniProtKB"/>
</dbReference>
<dbReference type="GO" id="GO:0006304">
    <property type="term" value="P:DNA modification"/>
    <property type="evidence" value="ECO:0007669"/>
    <property type="project" value="UniProtKB-KW"/>
</dbReference>
<dbReference type="GO" id="GO:0006303">
    <property type="term" value="P:double-strand break repair via nonhomologous end joining"/>
    <property type="evidence" value="ECO:0000318"/>
    <property type="project" value="GO_Central"/>
</dbReference>
<dbReference type="CDD" id="cd18443">
    <property type="entry name" value="BRCT_DNTT"/>
    <property type="match status" value="1"/>
</dbReference>
<dbReference type="CDD" id="cd00141">
    <property type="entry name" value="NT_POLXc"/>
    <property type="match status" value="1"/>
</dbReference>
<dbReference type="FunFam" id="3.30.210.10:FF:000003">
    <property type="entry name" value="DNA nucleotidylexotransferase"/>
    <property type="match status" value="1"/>
</dbReference>
<dbReference type="FunFam" id="1.10.150.20:FF:000010">
    <property type="entry name" value="DNA polymerase lambda"/>
    <property type="match status" value="1"/>
</dbReference>
<dbReference type="FunFam" id="1.10.150.110:FF:000003">
    <property type="entry name" value="DNA polymerase mu"/>
    <property type="match status" value="1"/>
</dbReference>
<dbReference type="FunFam" id="3.40.50.10190:FF:000035">
    <property type="entry name" value="DNA-directed DNA/RNA polymerase mu"/>
    <property type="match status" value="1"/>
</dbReference>
<dbReference type="Gene3D" id="1.10.150.20">
    <property type="entry name" value="5' to 3' exonuclease, C-terminal subdomain"/>
    <property type="match status" value="1"/>
</dbReference>
<dbReference type="Gene3D" id="3.30.460.10">
    <property type="entry name" value="Beta Polymerase, domain 2"/>
    <property type="match status" value="1"/>
</dbReference>
<dbReference type="Gene3D" id="3.40.50.10190">
    <property type="entry name" value="BRCT domain"/>
    <property type="match status" value="1"/>
</dbReference>
<dbReference type="Gene3D" id="1.10.150.110">
    <property type="entry name" value="DNA polymerase beta, N-terminal domain-like"/>
    <property type="match status" value="1"/>
</dbReference>
<dbReference type="Gene3D" id="3.30.210.10">
    <property type="entry name" value="DNA polymerase, thumb domain"/>
    <property type="match status" value="1"/>
</dbReference>
<dbReference type="InterPro" id="IPR001357">
    <property type="entry name" value="BRCT_dom"/>
</dbReference>
<dbReference type="InterPro" id="IPR036420">
    <property type="entry name" value="BRCT_dom_sf"/>
</dbReference>
<dbReference type="InterPro" id="IPR002054">
    <property type="entry name" value="DNA-dir_DNA_pol_X"/>
</dbReference>
<dbReference type="InterPro" id="IPR019843">
    <property type="entry name" value="DNA_pol-X_BS"/>
</dbReference>
<dbReference type="InterPro" id="IPR010996">
    <property type="entry name" value="DNA_pol_b-like_N"/>
</dbReference>
<dbReference type="InterPro" id="IPR028207">
    <property type="entry name" value="DNA_pol_B_palm_palm"/>
</dbReference>
<dbReference type="InterPro" id="IPR018944">
    <property type="entry name" value="DNA_pol_lambd_fingers_domain"/>
</dbReference>
<dbReference type="InterPro" id="IPR027421">
    <property type="entry name" value="DNA_pol_lamdba_lyase_dom_sf"/>
</dbReference>
<dbReference type="InterPro" id="IPR037160">
    <property type="entry name" value="DNA_Pol_thumb_sf"/>
</dbReference>
<dbReference type="InterPro" id="IPR022312">
    <property type="entry name" value="DNA_pol_X"/>
</dbReference>
<dbReference type="InterPro" id="IPR043519">
    <property type="entry name" value="NT_sf"/>
</dbReference>
<dbReference type="InterPro" id="IPR029398">
    <property type="entry name" value="PolB_thumb"/>
</dbReference>
<dbReference type="InterPro" id="IPR027292">
    <property type="entry name" value="TdT"/>
</dbReference>
<dbReference type="InterPro" id="IPR001726">
    <property type="entry name" value="TdT/Mu"/>
</dbReference>
<dbReference type="PANTHER" id="PTHR11276:SF21">
    <property type="entry name" value="DNA NUCLEOTIDYLEXOTRANSFERASE"/>
    <property type="match status" value="1"/>
</dbReference>
<dbReference type="PANTHER" id="PTHR11276">
    <property type="entry name" value="DNA POLYMERASE TYPE-X FAMILY MEMBER"/>
    <property type="match status" value="1"/>
</dbReference>
<dbReference type="Pfam" id="PF00533">
    <property type="entry name" value="BRCT"/>
    <property type="match status" value="1"/>
</dbReference>
<dbReference type="Pfam" id="PF14792">
    <property type="entry name" value="DNA_pol_B_palm"/>
    <property type="match status" value="1"/>
</dbReference>
<dbReference type="Pfam" id="PF14791">
    <property type="entry name" value="DNA_pol_B_thumb"/>
    <property type="match status" value="1"/>
</dbReference>
<dbReference type="Pfam" id="PF10391">
    <property type="entry name" value="DNA_pol_lambd_f"/>
    <property type="match status" value="1"/>
</dbReference>
<dbReference type="Pfam" id="PF14716">
    <property type="entry name" value="HHH_8"/>
    <property type="match status" value="1"/>
</dbReference>
<dbReference type="PIRSF" id="PIRSF000817">
    <property type="entry name" value="DNA_NT"/>
    <property type="match status" value="1"/>
</dbReference>
<dbReference type="PIRSF" id="PIRSF501175">
    <property type="entry name" value="TDT"/>
    <property type="match status" value="1"/>
</dbReference>
<dbReference type="PRINTS" id="PR00869">
    <property type="entry name" value="DNAPOLX"/>
</dbReference>
<dbReference type="PRINTS" id="PR00871">
    <property type="entry name" value="DNAPOLXTDT"/>
</dbReference>
<dbReference type="SMART" id="SM00292">
    <property type="entry name" value="BRCT"/>
    <property type="match status" value="1"/>
</dbReference>
<dbReference type="SMART" id="SM00483">
    <property type="entry name" value="POLXc"/>
    <property type="match status" value="1"/>
</dbReference>
<dbReference type="SUPFAM" id="SSF52113">
    <property type="entry name" value="BRCT domain"/>
    <property type="match status" value="1"/>
</dbReference>
<dbReference type="SUPFAM" id="SSF47802">
    <property type="entry name" value="DNA polymerase beta, N-terminal domain-like"/>
    <property type="match status" value="1"/>
</dbReference>
<dbReference type="SUPFAM" id="SSF81301">
    <property type="entry name" value="Nucleotidyltransferase"/>
    <property type="match status" value="1"/>
</dbReference>
<dbReference type="SUPFAM" id="SSF81585">
    <property type="entry name" value="PsbU/PolX domain-like"/>
    <property type="match status" value="1"/>
</dbReference>
<dbReference type="PROSITE" id="PS50172">
    <property type="entry name" value="BRCT"/>
    <property type="match status" value="1"/>
</dbReference>
<dbReference type="PROSITE" id="PS00522">
    <property type="entry name" value="DNA_POLYMERASE_X"/>
    <property type="match status" value="1"/>
</dbReference>
<evidence type="ECO:0000250" key="1">
    <source>
        <dbReference type="UniProtKB" id="P04053"/>
    </source>
</evidence>
<evidence type="ECO:0000250" key="2">
    <source>
        <dbReference type="UniProtKB" id="P06526"/>
    </source>
</evidence>
<evidence type="ECO:0000250" key="3">
    <source>
        <dbReference type="UniProtKB" id="P09838"/>
    </source>
</evidence>
<evidence type="ECO:0000255" key="4">
    <source>
        <dbReference type="PROSITE-ProRule" id="PRU00033"/>
    </source>
</evidence>
<evidence type="ECO:0000305" key="5"/>
<organism>
    <name type="scientific">Xenopus laevis</name>
    <name type="common">African clawed frog</name>
    <dbReference type="NCBI Taxonomy" id="8355"/>
    <lineage>
        <taxon>Eukaryota</taxon>
        <taxon>Metazoa</taxon>
        <taxon>Chordata</taxon>
        <taxon>Craniata</taxon>
        <taxon>Vertebrata</taxon>
        <taxon>Euteleostomi</taxon>
        <taxon>Amphibia</taxon>
        <taxon>Batrachia</taxon>
        <taxon>Anura</taxon>
        <taxon>Pipoidea</taxon>
        <taxon>Pipidae</taxon>
        <taxon>Xenopodinae</taxon>
        <taxon>Xenopus</taxon>
        <taxon>Xenopus</taxon>
    </lineage>
</organism>
<comment type="function">
    <text evidence="3">Template-independent DNA polymerase which catalyzes the random addition of deoxynucleoside 5'-triphosphate to the 3'-end of a DNA initiator. One of the in vivo functions of this enzyme is the addition of nucleotides at the junction (N region) of rearranged Ig heavy chain and T-cell receptor gene segments during the maturation of B- and T-cells.</text>
</comment>
<comment type="catalytic activity">
    <reaction evidence="3">
        <text>DNA(n) + a 2'-deoxyribonucleoside 5'-triphosphate = DNA(n+1) + diphosphate</text>
        <dbReference type="Rhea" id="RHEA:22508"/>
        <dbReference type="Rhea" id="RHEA-COMP:17339"/>
        <dbReference type="Rhea" id="RHEA-COMP:17340"/>
        <dbReference type="ChEBI" id="CHEBI:33019"/>
        <dbReference type="ChEBI" id="CHEBI:61560"/>
        <dbReference type="ChEBI" id="CHEBI:173112"/>
        <dbReference type="EC" id="2.7.7.31"/>
    </reaction>
</comment>
<comment type="cofactor">
    <cofactor evidence="3">
        <name>Mg(2+)</name>
        <dbReference type="ChEBI" id="CHEBI:18420"/>
    </cofactor>
    <text evidence="3">Can also utilize other divalent cations, such as Mn(2+) and Co(2+) (in vitro).</text>
</comment>
<comment type="subcellular location">
    <subcellularLocation>
        <location evidence="1">Nucleus</location>
    </subcellularLocation>
</comment>
<comment type="tissue specificity">
    <text>Found in the thymus and not in the spleen, kidney, intestine, or liver.</text>
</comment>
<comment type="developmental stage">
    <text>During ontogeny TDT appears in significant amounts in the thymus of tadpoles at metamorphic climax but little in the earlier midlarval stages.</text>
</comment>
<comment type="similarity">
    <text evidence="5">Belongs to the DNA polymerase type-X family.</text>
</comment>
<keyword id="KW-0460">Magnesium</keyword>
<keyword id="KW-0479">Metal-binding</keyword>
<keyword id="KW-0548">Nucleotidyltransferase</keyword>
<keyword id="KW-0539">Nucleus</keyword>
<keyword id="KW-1185">Reference proteome</keyword>
<keyword id="KW-0780">Terminal addition</keyword>
<keyword id="KW-0808">Transferase</keyword>
<proteinExistence type="evidence at transcript level"/>
<name>TDT_XENLA</name>
<feature type="chain" id="PRO_0000218797" description="DNA nucleotidylexotransferase">
    <location>
        <begin position="1"/>
        <end position="507"/>
    </location>
</feature>
<feature type="domain" description="BRCT" evidence="4">
    <location>
        <begin position="27"/>
        <end position="124"/>
    </location>
</feature>
<feature type="region of interest" description="Involved in DNA binding" evidence="3">
    <location>
        <begin position="254"/>
        <end position="258"/>
    </location>
</feature>
<feature type="short sequence motif" description="Nuclear localization signal" evidence="2">
    <location>
        <begin position="11"/>
        <end position="17"/>
    </location>
</feature>
<feature type="binding site" evidence="3">
    <location>
        <begin position="329"/>
        <end position="334"/>
    </location>
    <ligand>
        <name>a 2'-deoxyribonucleoside 5'-triphosphate</name>
        <dbReference type="ChEBI" id="CHEBI:61560"/>
    </ligand>
</feature>
<feature type="binding site" evidence="3">
    <location>
        <begin position="338"/>
        <end position="341"/>
    </location>
    <ligand>
        <name>a 2'-deoxyribonucleoside 5'-triphosphate</name>
        <dbReference type="ChEBI" id="CHEBI:61560"/>
    </ligand>
</feature>
<feature type="binding site" evidence="3">
    <location>
        <position position="339"/>
    </location>
    <ligand>
        <name>Mg(2+)</name>
        <dbReference type="ChEBI" id="CHEBI:18420"/>
    </ligand>
</feature>
<feature type="binding site" evidence="3">
    <location>
        <position position="341"/>
    </location>
    <ligand>
        <name>Mg(2+)</name>
        <dbReference type="ChEBI" id="CHEBI:18420"/>
    </ligand>
</feature>
<feature type="binding site" evidence="3">
    <location>
        <position position="431"/>
    </location>
    <ligand>
        <name>Mg(2+)</name>
        <dbReference type="ChEBI" id="CHEBI:18420"/>
    </ligand>
</feature>
<feature type="binding site" evidence="3">
    <location>
        <begin position="446"/>
        <end position="447"/>
    </location>
    <ligand>
        <name>a 2'-deoxyribonucleoside 5'-triphosphate</name>
        <dbReference type="ChEBI" id="CHEBI:61560"/>
    </ligand>
</feature>
<protein>
    <recommendedName>
        <fullName>DNA nucleotidylexotransferase</fullName>
        <ecNumber>2.7.7.31</ecNumber>
    </recommendedName>
    <alternativeName>
        <fullName>Terminal addition enzyme</fullName>
    </alternativeName>
    <alternativeName>
        <fullName>Terminal deoxynucleotidyltransferase</fullName>
        <shortName>TDT</shortName>
        <shortName>Terminal transferase</shortName>
    </alternativeName>
</protein>
<gene>
    <name type="primary">dntt</name>
    <name type="synonym">tdt</name>
</gene>
<reference key="1">
    <citation type="journal article" date="1994" name="J. Immunol.">
        <title>Isolation and characterization of the Xenopus terminal deoxynucleotidyl transferase.</title>
        <authorList>
            <person name="Lee A."/>
            <person name="Hsu E."/>
        </authorList>
    </citation>
    <scope>NUCLEOTIDE SEQUENCE [MRNA]</scope>
    <source>
        <tissue>Thymus</tissue>
    </source>
</reference>
<accession>P42118</accession>